<organism>
    <name type="scientific">Azorhizobium caulinodans (strain ATCC 43989 / DSM 5975 / JCM 20966 / LMG 6465 / NBRC 14845 / NCIMB 13405 / ORS 571)</name>
    <dbReference type="NCBI Taxonomy" id="438753"/>
    <lineage>
        <taxon>Bacteria</taxon>
        <taxon>Pseudomonadati</taxon>
        <taxon>Pseudomonadota</taxon>
        <taxon>Alphaproteobacteria</taxon>
        <taxon>Hyphomicrobiales</taxon>
        <taxon>Xanthobacteraceae</taxon>
        <taxon>Azorhizobium</taxon>
    </lineage>
</organism>
<keyword id="KW-1185">Reference proteome</keyword>
<keyword id="KW-0687">Ribonucleoprotein</keyword>
<keyword id="KW-0689">Ribosomal protein</keyword>
<dbReference type="EMBL" id="AP009384">
    <property type="protein sequence ID" value="BAF89950.1"/>
    <property type="molecule type" value="Genomic_DNA"/>
</dbReference>
<dbReference type="RefSeq" id="WP_012172472.1">
    <property type="nucleotide sequence ID" value="NC_009937.1"/>
</dbReference>
<dbReference type="SMR" id="A8IKU6"/>
<dbReference type="STRING" id="438753.AZC_3952"/>
<dbReference type="KEGG" id="azc:AZC_3952"/>
<dbReference type="eggNOG" id="COG0228">
    <property type="taxonomic scope" value="Bacteria"/>
</dbReference>
<dbReference type="HOGENOM" id="CLU_100590_3_1_5"/>
<dbReference type="Proteomes" id="UP000000270">
    <property type="component" value="Chromosome"/>
</dbReference>
<dbReference type="GO" id="GO:0005737">
    <property type="term" value="C:cytoplasm"/>
    <property type="evidence" value="ECO:0007669"/>
    <property type="project" value="UniProtKB-ARBA"/>
</dbReference>
<dbReference type="GO" id="GO:0015935">
    <property type="term" value="C:small ribosomal subunit"/>
    <property type="evidence" value="ECO:0007669"/>
    <property type="project" value="TreeGrafter"/>
</dbReference>
<dbReference type="GO" id="GO:0003735">
    <property type="term" value="F:structural constituent of ribosome"/>
    <property type="evidence" value="ECO:0007669"/>
    <property type="project" value="InterPro"/>
</dbReference>
<dbReference type="GO" id="GO:0006412">
    <property type="term" value="P:translation"/>
    <property type="evidence" value="ECO:0007669"/>
    <property type="project" value="UniProtKB-UniRule"/>
</dbReference>
<dbReference type="Gene3D" id="3.30.1320.10">
    <property type="match status" value="1"/>
</dbReference>
<dbReference type="HAMAP" id="MF_00385">
    <property type="entry name" value="Ribosomal_bS16"/>
    <property type="match status" value="1"/>
</dbReference>
<dbReference type="InterPro" id="IPR000307">
    <property type="entry name" value="Ribosomal_bS16"/>
</dbReference>
<dbReference type="InterPro" id="IPR020592">
    <property type="entry name" value="Ribosomal_bS16_CS"/>
</dbReference>
<dbReference type="InterPro" id="IPR023803">
    <property type="entry name" value="Ribosomal_bS16_dom_sf"/>
</dbReference>
<dbReference type="NCBIfam" id="TIGR00002">
    <property type="entry name" value="S16"/>
    <property type="match status" value="1"/>
</dbReference>
<dbReference type="PANTHER" id="PTHR12919">
    <property type="entry name" value="30S RIBOSOMAL PROTEIN S16"/>
    <property type="match status" value="1"/>
</dbReference>
<dbReference type="PANTHER" id="PTHR12919:SF20">
    <property type="entry name" value="SMALL RIBOSOMAL SUBUNIT PROTEIN BS16M"/>
    <property type="match status" value="1"/>
</dbReference>
<dbReference type="Pfam" id="PF00886">
    <property type="entry name" value="Ribosomal_S16"/>
    <property type="match status" value="1"/>
</dbReference>
<dbReference type="SUPFAM" id="SSF54565">
    <property type="entry name" value="Ribosomal protein S16"/>
    <property type="match status" value="1"/>
</dbReference>
<dbReference type="PROSITE" id="PS00732">
    <property type="entry name" value="RIBOSOMAL_S16"/>
    <property type="match status" value="1"/>
</dbReference>
<protein>
    <recommendedName>
        <fullName evidence="1">Small ribosomal subunit protein bS16</fullName>
    </recommendedName>
    <alternativeName>
        <fullName evidence="3">30S ribosomal protein S16</fullName>
    </alternativeName>
</protein>
<sequence>MSLKIRLARGGAKKRPYYRIVVADARSPRDGRFIEKIGTFNPLLAKDAAERVTLDTEKAKAWLEKGAQPTDRVARFLDAAGLLKREARNNPKKAEPGKKAQERAAERAAKAAEASEAASAE</sequence>
<gene>
    <name evidence="1" type="primary">rpsP</name>
    <name type="ordered locus">AZC_3952</name>
</gene>
<accession>A8IKU6</accession>
<proteinExistence type="inferred from homology"/>
<feature type="chain" id="PRO_1000072192" description="Small ribosomal subunit protein bS16">
    <location>
        <begin position="1"/>
        <end position="121"/>
    </location>
</feature>
<feature type="region of interest" description="Disordered" evidence="2">
    <location>
        <begin position="85"/>
        <end position="121"/>
    </location>
</feature>
<feature type="compositionally biased region" description="Basic and acidic residues" evidence="2">
    <location>
        <begin position="85"/>
        <end position="110"/>
    </location>
</feature>
<feature type="compositionally biased region" description="Low complexity" evidence="2">
    <location>
        <begin position="111"/>
        <end position="121"/>
    </location>
</feature>
<comment type="similarity">
    <text evidence="1">Belongs to the bacterial ribosomal protein bS16 family.</text>
</comment>
<reference key="1">
    <citation type="submission" date="2007-04" db="EMBL/GenBank/DDBJ databases">
        <title>Complete genome sequence of the nitrogen-fixing bacterium Azorhizobium caulinodans ORS571.</title>
        <authorList>
            <person name="Lee K.B."/>
            <person name="Backer P.D."/>
            <person name="Aono T."/>
            <person name="Liu C.T."/>
            <person name="Suzuki S."/>
            <person name="Suzuki T."/>
            <person name="Kaneko T."/>
            <person name="Yamada M."/>
            <person name="Tabata S."/>
            <person name="Kupfer D.M."/>
            <person name="Najar F.Z."/>
            <person name="Wiley G.B."/>
            <person name="Roe B."/>
            <person name="Binnewies T."/>
            <person name="Ussery D."/>
            <person name="Vereecke D."/>
            <person name="Gevers D."/>
            <person name="Holsters M."/>
            <person name="Oyaizu H."/>
        </authorList>
    </citation>
    <scope>NUCLEOTIDE SEQUENCE [LARGE SCALE GENOMIC DNA]</scope>
    <source>
        <strain>ATCC 43989 / DSM 5975 / JCM 20966 / LMG 6465 / NBRC 14845 / NCIMB 13405 / ORS 571</strain>
    </source>
</reference>
<name>RS16_AZOC5</name>
<evidence type="ECO:0000255" key="1">
    <source>
        <dbReference type="HAMAP-Rule" id="MF_00385"/>
    </source>
</evidence>
<evidence type="ECO:0000256" key="2">
    <source>
        <dbReference type="SAM" id="MobiDB-lite"/>
    </source>
</evidence>
<evidence type="ECO:0000305" key="3"/>